<keyword id="KW-0194">Cyanelle</keyword>
<keyword id="KW-0934">Plastid</keyword>
<keyword id="KW-0687">Ribonucleoprotein</keyword>
<keyword id="KW-0689">Ribosomal protein</keyword>
<keyword id="KW-0694">RNA-binding</keyword>
<keyword id="KW-0699">rRNA-binding</keyword>
<proteinExistence type="inferred from homology"/>
<protein>
    <recommendedName>
        <fullName evidence="2">Large ribosomal subunit protein uL18c</fullName>
    </recommendedName>
    <alternativeName>
        <fullName>50S ribosomal protein L18, cyanelle</fullName>
    </alternativeName>
</protein>
<dbReference type="EMBL" id="M30487">
    <property type="protein sequence ID" value="AAA63628.1"/>
    <property type="molecule type" value="Genomic_DNA"/>
</dbReference>
<dbReference type="EMBL" id="U30821">
    <property type="protein sequence ID" value="AAA81220.1"/>
    <property type="molecule type" value="Genomic_DNA"/>
</dbReference>
<dbReference type="PIR" id="S12219">
    <property type="entry name" value="R5KT18"/>
</dbReference>
<dbReference type="RefSeq" id="NP_043189.1">
    <property type="nucleotide sequence ID" value="NC_001675.1"/>
</dbReference>
<dbReference type="SMR" id="P23407"/>
<dbReference type="GeneID" id="801563"/>
<dbReference type="GO" id="GO:0009842">
    <property type="term" value="C:cyanelle"/>
    <property type="evidence" value="ECO:0007669"/>
    <property type="project" value="UniProtKB-SubCell"/>
</dbReference>
<dbReference type="GO" id="GO:0022625">
    <property type="term" value="C:cytosolic large ribosomal subunit"/>
    <property type="evidence" value="ECO:0007669"/>
    <property type="project" value="TreeGrafter"/>
</dbReference>
<dbReference type="GO" id="GO:0008097">
    <property type="term" value="F:5S rRNA binding"/>
    <property type="evidence" value="ECO:0007669"/>
    <property type="project" value="TreeGrafter"/>
</dbReference>
<dbReference type="GO" id="GO:0003735">
    <property type="term" value="F:structural constituent of ribosome"/>
    <property type="evidence" value="ECO:0007669"/>
    <property type="project" value="InterPro"/>
</dbReference>
<dbReference type="GO" id="GO:0006412">
    <property type="term" value="P:translation"/>
    <property type="evidence" value="ECO:0007669"/>
    <property type="project" value="InterPro"/>
</dbReference>
<dbReference type="CDD" id="cd00432">
    <property type="entry name" value="Ribosomal_L18_L5e"/>
    <property type="match status" value="1"/>
</dbReference>
<dbReference type="FunFam" id="3.30.420.100:FF:000001">
    <property type="entry name" value="50S ribosomal protein L18"/>
    <property type="match status" value="1"/>
</dbReference>
<dbReference type="Gene3D" id="3.30.420.100">
    <property type="match status" value="1"/>
</dbReference>
<dbReference type="HAMAP" id="MF_01337_B">
    <property type="entry name" value="Ribosomal_uL18_B"/>
    <property type="match status" value="1"/>
</dbReference>
<dbReference type="InterPro" id="IPR004389">
    <property type="entry name" value="Ribosomal_uL18_bac-type"/>
</dbReference>
<dbReference type="InterPro" id="IPR005484">
    <property type="entry name" value="Ribosomal_uL18_bac/euk"/>
</dbReference>
<dbReference type="NCBIfam" id="TIGR00060">
    <property type="entry name" value="L18_bact"/>
    <property type="match status" value="1"/>
</dbReference>
<dbReference type="PANTHER" id="PTHR12899">
    <property type="entry name" value="39S RIBOSOMAL PROTEIN L18, MITOCHONDRIAL"/>
    <property type="match status" value="1"/>
</dbReference>
<dbReference type="PANTHER" id="PTHR12899:SF3">
    <property type="entry name" value="LARGE RIBOSOMAL SUBUNIT PROTEIN UL18M"/>
    <property type="match status" value="1"/>
</dbReference>
<dbReference type="Pfam" id="PF00861">
    <property type="entry name" value="Ribosomal_L18p"/>
    <property type="match status" value="1"/>
</dbReference>
<dbReference type="SUPFAM" id="SSF53137">
    <property type="entry name" value="Translational machinery components"/>
    <property type="match status" value="1"/>
</dbReference>
<sequence length="121" mass="13555">MKLTRKQATQRRHRRVRRKVFGTSERPRLAVFRSHQHIYAQIIDDTQHRTLAASSTLEPSVKNSELSSTSTCAASAIVGQLIAKKALEKGITQVVFDRGGKIYHGRVRTLAEAAREAGLQF</sequence>
<evidence type="ECO:0000250" key="1"/>
<evidence type="ECO:0000305" key="2"/>
<comment type="function">
    <text evidence="1">Binds 5S rRNA, forms part of the central protuberance of the 50S subunit.</text>
</comment>
<comment type="subunit">
    <text evidence="1">Part of the 50S ribosomal subunit; contacts the 5S rRNA.</text>
</comment>
<comment type="subcellular location">
    <subcellularLocation>
        <location>Plastid</location>
        <location>Cyanelle</location>
    </subcellularLocation>
</comment>
<comment type="similarity">
    <text evidence="2">Belongs to the universal ribosomal protein uL18 family.</text>
</comment>
<reference key="1">
    <citation type="journal article" date="1990" name="Mol. Gen. Genet.">
        <title>The cyanelle S10 spc ribosomal protein gene operon from Cyanophora paradoxa.</title>
        <authorList>
            <person name="Michalowski C.B."/>
            <person name="Pfanzagl B."/>
            <person name="Loeffelhardt W."/>
            <person name="Bohnert H.J."/>
        </authorList>
    </citation>
    <scope>NUCLEOTIDE SEQUENCE [GENOMIC DNA]</scope>
    <source>
        <strain>UTEX 5550</strain>
    </source>
</reference>
<reference key="2">
    <citation type="journal article" date="1995" name="Plant Mol. Biol. Rep.">
        <title>Nucleotide sequence of the cyanelle DNA from Cyanophora paradoxa.</title>
        <authorList>
            <person name="Stirewalt V.L."/>
            <person name="Michalowski C.B."/>
            <person name="Loeffelhardt W."/>
            <person name="Bohnert H.J."/>
            <person name="Bryant D.A."/>
        </authorList>
    </citation>
    <scope>NUCLEOTIDE SEQUENCE [LARGE SCALE GENOMIC DNA]</scope>
    <source>
        <strain>UTEX LB 555 / Pringsheim</strain>
    </source>
</reference>
<reference key="3">
    <citation type="book" date="1997" name="Eukaryotism and symbiosis">
        <title>The complete sequence of the cyanelle genome of Cyanophora paradoxa: the genetic complexity of a primitive plastid.</title>
        <editorList>
            <person name="Schenk H.E.A."/>
            <person name="Herrmann R."/>
            <person name="Jeon K.W."/>
            <person name="Mueller N.E."/>
            <person name="Schwemmler W."/>
        </editorList>
        <authorList>
            <person name="Loeffelhardt W."/>
            <person name="Stirewalt V.L."/>
            <person name="Michalowski C.B."/>
            <person name="Annarella M."/>
            <person name="Farley J.Y."/>
            <person name="Schluchter W.M."/>
            <person name="Chung S."/>
            <person name="Newmann-Spallart C."/>
            <person name="Steiner J.M."/>
            <person name="Jakowitsch J."/>
            <person name="Bohnert H.J."/>
            <person name="Bryant D.A."/>
        </authorList>
    </citation>
    <scope>NUCLEOTIDE SEQUENCE [LARGE SCALE GENOMIC DNA]</scope>
    <source>
        <strain>UTEX LB 555 / Pringsheim</strain>
    </source>
</reference>
<feature type="chain" id="PRO_0000131424" description="Large ribosomal subunit protein uL18c">
    <location>
        <begin position="1"/>
        <end position="121"/>
    </location>
</feature>
<organism>
    <name type="scientific">Cyanophora paradoxa</name>
    <dbReference type="NCBI Taxonomy" id="2762"/>
    <lineage>
        <taxon>Eukaryota</taxon>
        <taxon>Glaucocystophyceae</taxon>
        <taxon>Cyanophoraceae</taxon>
        <taxon>Cyanophora</taxon>
    </lineage>
</organism>
<name>RK18_CYAPA</name>
<geneLocation type="cyanelle"/>
<accession>P23407</accession>
<gene>
    <name type="primary">rpl18</name>
</gene>